<sequence>MTIRLSDEARQLIAVFETETDATAVDCLPDDDRVVYVVTAGEMGAAIGDGGSRVDALEATLGRSVVLVEDAPTAEGFVANALSPAAVYNVTVSENDTTVAYAEVAHEDKGVAIGADGTNIETAKELAARHFDIDDIQLT</sequence>
<comment type="function">
    <text evidence="1">Participates in transcription termination.</text>
</comment>
<comment type="subcellular location">
    <subcellularLocation>
        <location evidence="1">Cytoplasm</location>
    </subcellularLocation>
</comment>
<comment type="similarity">
    <text evidence="1">Belongs to the NusA family.</text>
</comment>
<protein>
    <recommendedName>
        <fullName evidence="1">Probable transcription termination protein NusA</fullName>
    </recommendedName>
</protein>
<accession>P0CW99</accession>
<accession>P15739</accession>
<accession>Q9HM81</accession>
<proteinExistence type="inferred from homology"/>
<keyword id="KW-0963">Cytoplasm</keyword>
<keyword id="KW-1185">Reference proteome</keyword>
<keyword id="KW-0694">RNA-binding</keyword>
<keyword id="KW-0804">Transcription</keyword>
<keyword id="KW-0805">Transcription regulation</keyword>
<keyword id="KW-0806">Transcription termination</keyword>
<reference key="1">
    <citation type="journal article" date="2000" name="Proc. Natl. Acad. Sci. U.S.A.">
        <title>Genome sequence of Halobacterium species NRC-1.</title>
        <authorList>
            <person name="Ng W.V."/>
            <person name="Kennedy S.P."/>
            <person name="Mahairas G.G."/>
            <person name="Berquist B."/>
            <person name="Pan M."/>
            <person name="Shukla H.D."/>
            <person name="Lasky S.R."/>
            <person name="Baliga N.S."/>
            <person name="Thorsson V."/>
            <person name="Sbrogna J."/>
            <person name="Swartzell S."/>
            <person name="Weir D."/>
            <person name="Hall J."/>
            <person name="Dahl T.A."/>
            <person name="Welti R."/>
            <person name="Goo Y.A."/>
            <person name="Leithauser B."/>
            <person name="Keller K."/>
            <person name="Cruz R."/>
            <person name="Danson M.J."/>
            <person name="Hough D.W."/>
            <person name="Maddocks D.G."/>
            <person name="Jablonski P.E."/>
            <person name="Krebs M.P."/>
            <person name="Angevine C.M."/>
            <person name="Dale H."/>
            <person name="Isenbarger T.A."/>
            <person name="Peck R.F."/>
            <person name="Pohlschroder M."/>
            <person name="Spudich J.L."/>
            <person name="Jung K.-H."/>
            <person name="Alam M."/>
            <person name="Freitas T."/>
            <person name="Hou S."/>
            <person name="Daniels C.J."/>
            <person name="Dennis P.P."/>
            <person name="Omer A.D."/>
            <person name="Ebhardt H."/>
            <person name="Lowe T.M."/>
            <person name="Liang P."/>
            <person name="Riley M."/>
            <person name="Hood L."/>
            <person name="DasSarma S."/>
        </authorList>
    </citation>
    <scope>NUCLEOTIDE SEQUENCE [LARGE SCALE GENOMIC DNA]</scope>
    <source>
        <strain>ATCC 700922 / JCM 11081 / NRC-1</strain>
    </source>
</reference>
<dbReference type="EMBL" id="AE004437">
    <property type="protein sequence ID" value="AAG20690.1"/>
    <property type="molecule type" value="Genomic_DNA"/>
</dbReference>
<dbReference type="PIR" id="F84415">
    <property type="entry name" value="F84415"/>
</dbReference>
<dbReference type="RefSeq" id="WP_010903994.1">
    <property type="nucleotide sequence ID" value="NC_002607.1"/>
</dbReference>
<dbReference type="SMR" id="P0CW99"/>
<dbReference type="FunCoup" id="P0CW99">
    <property type="interactions" value="4"/>
</dbReference>
<dbReference type="STRING" id="64091.VNG_2661G"/>
<dbReference type="PaxDb" id="64091-VNG_2661G"/>
<dbReference type="KEGG" id="hal:VNG_2661G"/>
<dbReference type="PATRIC" id="fig|64091.14.peg.2067"/>
<dbReference type="HOGENOM" id="CLU_131906_0_0_2"/>
<dbReference type="InParanoid" id="P0CW99"/>
<dbReference type="OrthoDB" id="4116at2157"/>
<dbReference type="PhylomeDB" id="P0CW99"/>
<dbReference type="Proteomes" id="UP000000554">
    <property type="component" value="Chromosome"/>
</dbReference>
<dbReference type="GO" id="GO:0005829">
    <property type="term" value="C:cytosol"/>
    <property type="evidence" value="ECO:0000318"/>
    <property type="project" value="GO_Central"/>
</dbReference>
<dbReference type="GO" id="GO:0003723">
    <property type="term" value="F:RNA binding"/>
    <property type="evidence" value="ECO:0007669"/>
    <property type="project" value="UniProtKB-KW"/>
</dbReference>
<dbReference type="GO" id="GO:0006353">
    <property type="term" value="P:DNA-templated transcription termination"/>
    <property type="evidence" value="ECO:0007669"/>
    <property type="project" value="UniProtKB-UniRule"/>
</dbReference>
<dbReference type="GO" id="GO:0031564">
    <property type="term" value="P:transcription antitermination"/>
    <property type="evidence" value="ECO:0000318"/>
    <property type="project" value="GO_Central"/>
</dbReference>
<dbReference type="CDD" id="cd22530">
    <property type="entry name" value="KH-II_NusA_arch_rpt1"/>
    <property type="match status" value="1"/>
</dbReference>
<dbReference type="CDD" id="cd22531">
    <property type="entry name" value="KH-II_NusA_arch_rpt2"/>
    <property type="match status" value="1"/>
</dbReference>
<dbReference type="Gene3D" id="3.30.300.20">
    <property type="match status" value="2"/>
</dbReference>
<dbReference type="HAMAP" id="MF_00945_A">
    <property type="entry name" value="NusA_A"/>
    <property type="match status" value="1"/>
</dbReference>
<dbReference type="InterPro" id="IPR015946">
    <property type="entry name" value="KH_dom-like_a/b"/>
</dbReference>
<dbReference type="InterPro" id="IPR025249">
    <property type="entry name" value="KH_dom_NusA-like"/>
</dbReference>
<dbReference type="InterPro" id="IPR009019">
    <property type="entry name" value="KH_sf_prok-type"/>
</dbReference>
<dbReference type="InterPro" id="IPR010212">
    <property type="entry name" value="NusA_arc"/>
</dbReference>
<dbReference type="InterPro" id="IPR030842">
    <property type="entry name" value="NusA_bac"/>
</dbReference>
<dbReference type="NCBIfam" id="TIGR01952">
    <property type="entry name" value="nusA_arch"/>
    <property type="match status" value="1"/>
</dbReference>
<dbReference type="PANTHER" id="PTHR22648">
    <property type="entry name" value="TRANSCRIPTION TERMINATION FACTOR NUSA"/>
    <property type="match status" value="1"/>
</dbReference>
<dbReference type="PANTHER" id="PTHR22648:SF0">
    <property type="entry name" value="TRANSCRIPTION TERMINATION_ANTITERMINATION PROTEIN NUSA"/>
    <property type="match status" value="1"/>
</dbReference>
<dbReference type="Pfam" id="PF13184">
    <property type="entry name" value="KH_5"/>
    <property type="match status" value="1"/>
</dbReference>
<dbReference type="SUPFAM" id="SSF54814">
    <property type="entry name" value="Prokaryotic type KH domain (KH-domain type II)"/>
    <property type="match status" value="2"/>
</dbReference>
<name>NUSA_HALSA</name>
<feature type="chain" id="PRO_0000181982" description="Probable transcription termination protein NusA">
    <location>
        <begin position="1"/>
        <end position="139"/>
    </location>
</feature>
<feature type="domain" description="KH" evidence="1">
    <location>
        <begin position="31"/>
        <end position="97"/>
    </location>
</feature>
<gene>
    <name evidence="1" type="primary">nusA</name>
    <name type="ordered locus">VNG_2661G</name>
</gene>
<evidence type="ECO:0000255" key="1">
    <source>
        <dbReference type="HAMAP-Rule" id="MF_00945"/>
    </source>
</evidence>
<organism>
    <name type="scientific">Halobacterium salinarum (strain ATCC 700922 / JCM 11081 / NRC-1)</name>
    <name type="common">Halobacterium halobium</name>
    <dbReference type="NCBI Taxonomy" id="64091"/>
    <lineage>
        <taxon>Archaea</taxon>
        <taxon>Methanobacteriati</taxon>
        <taxon>Methanobacteriota</taxon>
        <taxon>Stenosarchaea group</taxon>
        <taxon>Halobacteria</taxon>
        <taxon>Halobacteriales</taxon>
        <taxon>Halobacteriaceae</taxon>
        <taxon>Halobacterium</taxon>
        <taxon>Halobacterium salinarum NRC-34001</taxon>
    </lineage>
</organism>